<accession>Q4PFI5</accession>
<accession>A0A0D1E5E4</accession>
<reference key="1">
    <citation type="journal article" date="2006" name="Nature">
        <title>Insights from the genome of the biotrophic fungal plant pathogen Ustilago maydis.</title>
        <authorList>
            <person name="Kaemper J."/>
            <person name="Kahmann R."/>
            <person name="Boelker M."/>
            <person name="Ma L.-J."/>
            <person name="Brefort T."/>
            <person name="Saville B.J."/>
            <person name="Banuett F."/>
            <person name="Kronstad J.W."/>
            <person name="Gold S.E."/>
            <person name="Mueller O."/>
            <person name="Perlin M.H."/>
            <person name="Woesten H.A.B."/>
            <person name="de Vries R."/>
            <person name="Ruiz-Herrera J."/>
            <person name="Reynaga-Pena C.G."/>
            <person name="Snetselaar K."/>
            <person name="McCann M."/>
            <person name="Perez-Martin J."/>
            <person name="Feldbruegge M."/>
            <person name="Basse C.W."/>
            <person name="Steinberg G."/>
            <person name="Ibeas J.I."/>
            <person name="Holloman W."/>
            <person name="Guzman P."/>
            <person name="Farman M.L."/>
            <person name="Stajich J.E."/>
            <person name="Sentandreu R."/>
            <person name="Gonzalez-Prieto J.M."/>
            <person name="Kennell J.C."/>
            <person name="Molina L."/>
            <person name="Schirawski J."/>
            <person name="Mendoza-Mendoza A."/>
            <person name="Greilinger D."/>
            <person name="Muench K."/>
            <person name="Roessel N."/>
            <person name="Scherer M."/>
            <person name="Vranes M."/>
            <person name="Ladendorf O."/>
            <person name="Vincon V."/>
            <person name="Fuchs U."/>
            <person name="Sandrock B."/>
            <person name="Meng S."/>
            <person name="Ho E.C.H."/>
            <person name="Cahill M.J."/>
            <person name="Boyce K.J."/>
            <person name="Klose J."/>
            <person name="Klosterman S.J."/>
            <person name="Deelstra H.J."/>
            <person name="Ortiz-Castellanos L."/>
            <person name="Li W."/>
            <person name="Sanchez-Alonso P."/>
            <person name="Schreier P.H."/>
            <person name="Haeuser-Hahn I."/>
            <person name="Vaupel M."/>
            <person name="Koopmann E."/>
            <person name="Friedrich G."/>
            <person name="Voss H."/>
            <person name="Schlueter T."/>
            <person name="Margolis J."/>
            <person name="Platt D."/>
            <person name="Swimmer C."/>
            <person name="Gnirke A."/>
            <person name="Chen F."/>
            <person name="Vysotskaia V."/>
            <person name="Mannhaupt G."/>
            <person name="Gueldener U."/>
            <person name="Muensterkoetter M."/>
            <person name="Haase D."/>
            <person name="Oesterheld M."/>
            <person name="Mewes H.-W."/>
            <person name="Mauceli E.W."/>
            <person name="DeCaprio D."/>
            <person name="Wade C.M."/>
            <person name="Butler J."/>
            <person name="Young S.K."/>
            <person name="Jaffe D.B."/>
            <person name="Calvo S.E."/>
            <person name="Nusbaum C."/>
            <person name="Galagan J.E."/>
            <person name="Birren B.W."/>
        </authorList>
    </citation>
    <scope>NUCLEOTIDE SEQUENCE [LARGE SCALE GENOMIC DNA]</scope>
    <source>
        <strain>DSM 14603 / FGSC 9021 / UM521</strain>
    </source>
</reference>
<reference key="2">
    <citation type="submission" date="2014-09" db="EMBL/GenBank/DDBJ databases">
        <authorList>
            <person name="Gueldener U."/>
            <person name="Muensterkoetter M."/>
            <person name="Walter M.C."/>
            <person name="Mannhaupt G."/>
            <person name="Kahmann R."/>
        </authorList>
    </citation>
    <scope>GENOME REANNOTATION</scope>
    <source>
        <strain>DSM 14603 / FGSC 9021 / UM521</strain>
    </source>
</reference>
<protein>
    <recommendedName>
        <fullName>Protein AF-9 homolog</fullName>
    </recommendedName>
</protein>
<proteinExistence type="inferred from homology"/>
<comment type="function">
    <text evidence="1">Component of the SWR1 complex which mediates the ATP-dependent exchange of histone H2A for the H2A variant HZT1 leading to transcriptional regulation of selected genes by chromatin remodeling. Component of the NuA4 histone acetyltransferase complex which is involved in transcriptional activation of selected genes principally by acetylation of nucleosomal histones H4 and H2A. The NuA4 complex is also involved in DNA repair. Yaf9 may also be required for viability in conditions in which the structural integrity of the spindle is compromised (By similarity).</text>
</comment>
<comment type="subunit">
    <text evidence="1">Component of the SWR1 chromatin-remodeling complex and of the NuA4 histone acetyltransferase complex.</text>
</comment>
<comment type="subcellular location">
    <subcellularLocation>
        <location evidence="1">Cytoplasm</location>
    </subcellularLocation>
    <subcellularLocation>
        <location evidence="3">Nucleus</location>
    </subcellularLocation>
</comment>
<comment type="domain">
    <text evidence="1">The coiled-coil domain is required for assembly into the NuA4 complex.</text>
</comment>
<comment type="similarity">
    <text evidence="5">Belongs to the YAF9 family.</text>
</comment>
<keyword id="KW-0010">Activator</keyword>
<keyword id="KW-0156">Chromatin regulator</keyword>
<keyword id="KW-0175">Coiled coil</keyword>
<keyword id="KW-0963">Cytoplasm</keyword>
<keyword id="KW-0227">DNA damage</keyword>
<keyword id="KW-0234">DNA repair</keyword>
<keyword id="KW-0539">Nucleus</keyword>
<keyword id="KW-1185">Reference proteome</keyword>
<keyword id="KW-0804">Transcription</keyword>
<keyword id="KW-0805">Transcription regulation</keyword>
<dbReference type="EMBL" id="CM003141">
    <property type="protein sequence ID" value="KIS71224.1"/>
    <property type="molecule type" value="Genomic_DNA"/>
</dbReference>
<dbReference type="RefSeq" id="XP_011387079.1">
    <property type="nucleotide sequence ID" value="XM_011388777.1"/>
</dbReference>
<dbReference type="SMR" id="Q4PFI5"/>
<dbReference type="STRING" id="237631.Q4PFI5"/>
<dbReference type="EnsemblFungi" id="KIS71224">
    <property type="protein sequence ID" value="KIS71224"/>
    <property type="gene ID" value="UMAG_01128"/>
</dbReference>
<dbReference type="GeneID" id="23562235"/>
<dbReference type="KEGG" id="uma:UMAG_01128"/>
<dbReference type="VEuPathDB" id="FungiDB:UMAG_01128"/>
<dbReference type="eggNOG" id="KOG3149">
    <property type="taxonomic scope" value="Eukaryota"/>
</dbReference>
<dbReference type="HOGENOM" id="CLU_051385_2_1_1"/>
<dbReference type="InParanoid" id="Q4PFI5"/>
<dbReference type="OMA" id="DYHKMVG"/>
<dbReference type="OrthoDB" id="16041at2759"/>
<dbReference type="Proteomes" id="UP000000561">
    <property type="component" value="Chromosome 2"/>
</dbReference>
<dbReference type="GO" id="GO:0005737">
    <property type="term" value="C:cytoplasm"/>
    <property type="evidence" value="ECO:0007669"/>
    <property type="project" value="UniProtKB-SubCell"/>
</dbReference>
<dbReference type="GO" id="GO:0035267">
    <property type="term" value="C:NuA4 histone acetyltransferase complex"/>
    <property type="evidence" value="ECO:0000318"/>
    <property type="project" value="GO_Central"/>
</dbReference>
<dbReference type="GO" id="GO:0005634">
    <property type="term" value="C:nucleus"/>
    <property type="evidence" value="ECO:0000318"/>
    <property type="project" value="GO_Central"/>
</dbReference>
<dbReference type="GO" id="GO:0042393">
    <property type="term" value="F:histone binding"/>
    <property type="evidence" value="ECO:0000318"/>
    <property type="project" value="GO_Central"/>
</dbReference>
<dbReference type="GO" id="GO:0006338">
    <property type="term" value="P:chromatin remodeling"/>
    <property type="evidence" value="ECO:0000318"/>
    <property type="project" value="GO_Central"/>
</dbReference>
<dbReference type="GO" id="GO:0006281">
    <property type="term" value="P:DNA repair"/>
    <property type="evidence" value="ECO:0007669"/>
    <property type="project" value="UniProtKB-KW"/>
</dbReference>
<dbReference type="GO" id="GO:0006357">
    <property type="term" value="P:regulation of transcription by RNA polymerase II"/>
    <property type="evidence" value="ECO:0000318"/>
    <property type="project" value="GO_Central"/>
</dbReference>
<dbReference type="CDD" id="cd16908">
    <property type="entry name" value="YEATS_Yaf9_like"/>
    <property type="match status" value="1"/>
</dbReference>
<dbReference type="Gene3D" id="2.60.40.1970">
    <property type="entry name" value="YEATS domain"/>
    <property type="match status" value="1"/>
</dbReference>
<dbReference type="InterPro" id="IPR038704">
    <property type="entry name" value="YEAST_sf"/>
</dbReference>
<dbReference type="InterPro" id="IPR005033">
    <property type="entry name" value="YEATS"/>
</dbReference>
<dbReference type="InterPro" id="IPR055129">
    <property type="entry name" value="YEATS_dom"/>
</dbReference>
<dbReference type="PANTHER" id="PTHR23195">
    <property type="entry name" value="YEATS DOMAIN"/>
    <property type="match status" value="1"/>
</dbReference>
<dbReference type="Pfam" id="PF03366">
    <property type="entry name" value="YEATS"/>
    <property type="match status" value="1"/>
</dbReference>
<dbReference type="PROSITE" id="PS51037">
    <property type="entry name" value="YEATS"/>
    <property type="match status" value="1"/>
</dbReference>
<evidence type="ECO:0000250" key="1"/>
<evidence type="ECO:0000255" key="2"/>
<evidence type="ECO:0000255" key="3">
    <source>
        <dbReference type="PROSITE-ProRule" id="PRU00376"/>
    </source>
</evidence>
<evidence type="ECO:0000256" key="4">
    <source>
        <dbReference type="SAM" id="MobiDB-lite"/>
    </source>
</evidence>
<evidence type="ECO:0000305" key="5"/>
<name>AF9_MYCMD</name>
<organism>
    <name type="scientific">Mycosarcoma maydis</name>
    <name type="common">Corn smut fungus</name>
    <name type="synonym">Ustilago maydis</name>
    <dbReference type="NCBI Taxonomy" id="5270"/>
    <lineage>
        <taxon>Eukaryota</taxon>
        <taxon>Fungi</taxon>
        <taxon>Dikarya</taxon>
        <taxon>Basidiomycota</taxon>
        <taxon>Ustilaginomycotina</taxon>
        <taxon>Ustilaginomycetes</taxon>
        <taxon>Ustilaginales</taxon>
        <taxon>Ustilaginaceae</taxon>
        <taxon>Mycosarcoma</taxon>
    </lineage>
</organism>
<sequence length="431" mass="45757">MSNKRVRGLAIHRPILYGSTSTPLTPAEKLAAPPDHTHKWTVAVRSAASLPLPSLSAISGASDGSSFEPGSEVGAINAASGMATPSSSSAAGGSAATVSTRGRDQEHDYHKMVGNKDDISHFIKRVQFKLHETYSQPTRNVDKFPFHITETGWGEFEIQIKIFFVAEANEKPLTLFHHLKLHPWLQNVAAVETEPPAPPAPSLPAPLPPADMSATNSSVEQDGQASTSANGTKQEAGPDSMEVDPTASSTTEQQTSTDAKVESTPVAEPAVATTEPLKPALPPVVHSWQYDEIVFPEPMEAFYDILSTHPPTPLPVVSALAFADPAAYRSYLYAKADAAKGNSTGPPPIPPHPLHTPTGYLFDALSLEAQNAEGERLEMARIAAIKDLEKGREQLIKAEKALKDARNRIAALNNAALASCTAVSGTVPPAS</sequence>
<feature type="chain" id="PRO_0000215932" description="Protein AF-9 homolog">
    <location>
        <begin position="1"/>
        <end position="431"/>
    </location>
</feature>
<feature type="domain" description="YEATS" evidence="3">
    <location>
        <begin position="5"/>
        <end position="309"/>
    </location>
</feature>
<feature type="region of interest" description="Disordered" evidence="4">
    <location>
        <begin position="80"/>
        <end position="113"/>
    </location>
</feature>
<feature type="region of interest" description="Disordered" evidence="4">
    <location>
        <begin position="193"/>
        <end position="274"/>
    </location>
</feature>
<feature type="coiled-coil region" evidence="2">
    <location>
        <begin position="383"/>
        <end position="419"/>
    </location>
</feature>
<feature type="compositionally biased region" description="Low complexity" evidence="4">
    <location>
        <begin position="80"/>
        <end position="100"/>
    </location>
</feature>
<feature type="compositionally biased region" description="Basic and acidic residues" evidence="4">
    <location>
        <begin position="101"/>
        <end position="113"/>
    </location>
</feature>
<feature type="compositionally biased region" description="Pro residues" evidence="4">
    <location>
        <begin position="195"/>
        <end position="209"/>
    </location>
</feature>
<feature type="compositionally biased region" description="Polar residues" evidence="4">
    <location>
        <begin position="213"/>
        <end position="233"/>
    </location>
</feature>
<feature type="compositionally biased region" description="Low complexity" evidence="4">
    <location>
        <begin position="246"/>
        <end position="257"/>
    </location>
</feature>
<gene>
    <name type="primary">YAF9</name>
    <name type="ORF">UMAG_01128</name>
</gene>